<keyword id="KW-0325">Glycoprotein</keyword>
<keyword id="KW-0472">Membrane</keyword>
<keyword id="KW-1185">Reference proteome</keyword>
<keyword id="KW-0812">Transmembrane</keyword>
<keyword id="KW-1133">Transmembrane helix</keyword>
<keyword id="KW-0813">Transport</keyword>
<gene>
    <name evidence="6" type="primary">FUS6</name>
    <name type="ORF">FVEG_11081</name>
</gene>
<sequence>MPQPDKMAAVNNAMPQPAPEKSLSSDPQPESSKKSARFWLIFVAIALTTFLAALDTSIISTALPTITADLGSESLYVWIIDAYLLASTATIPIFAQAANIYGRRSLTLIAVCIFTLGSGLCGGAHNTAMMVGGRAVQGIGGGGILTMSEIVVCDMVSIRERGMYAGIIGGVWAIAAVVAPVMGGAFAQNISWRWIFYINLPIAGVSLVALGLFLKLARPPSGTVKEQMSRIDWGGSVLLIGSVTSIVLALSWGGSEHPWSGWQTIVPLVIGLLALVAFFAYQGAPWLREPTMPLRLFGNRTSSTLLVISFIHSLLLYWVCYFLPVYFQAVKEASPTRSAVMLFPIACTSAPAGVAAGITITKTGKYRVWHFTGFVLMSIACGLFTLLDAQSSTGRWVGFQILFGVGTGTVFTSTLPPILASLPDSDVATATGAWTFIRNFGSIWGVAIPAAVFNNQVNHAAPKISDSTVKSLLVDGGAYEHATQHFIKSLSPNPELKTQVIQVYLEGLKVVWQVSLAFCLLGFILCFFVRSLTLRDELNTEFGLKEEKPNSKNMSSEEGVVRE</sequence>
<evidence type="ECO:0000250" key="1">
    <source>
        <dbReference type="UniProtKB" id="S0EEY7"/>
    </source>
</evidence>
<evidence type="ECO:0000255" key="2"/>
<evidence type="ECO:0000255" key="3">
    <source>
        <dbReference type="PROSITE-ProRule" id="PRU00498"/>
    </source>
</evidence>
<evidence type="ECO:0000256" key="4">
    <source>
        <dbReference type="SAM" id="MobiDB-lite"/>
    </source>
</evidence>
<evidence type="ECO:0000269" key="5">
    <source>
    </source>
</evidence>
<evidence type="ECO:0000303" key="6">
    <source>
    </source>
</evidence>
<evidence type="ECO:0000305" key="7"/>
<accession>W7MLD3</accession>
<reference key="1">
    <citation type="journal article" date="2010" name="Nature">
        <title>Comparative genomics reveals mobile pathogenicity chromosomes in Fusarium.</title>
        <authorList>
            <person name="Ma L.-J."/>
            <person name="van der Does H.C."/>
            <person name="Borkovich K.A."/>
            <person name="Coleman J.J."/>
            <person name="Daboussi M.-J."/>
            <person name="Di Pietro A."/>
            <person name="Dufresne M."/>
            <person name="Freitag M."/>
            <person name="Grabherr M."/>
            <person name="Henrissat B."/>
            <person name="Houterman P.M."/>
            <person name="Kang S."/>
            <person name="Shim W.-B."/>
            <person name="Woloshuk C."/>
            <person name="Xie X."/>
            <person name="Xu J.-R."/>
            <person name="Antoniw J."/>
            <person name="Baker S.E."/>
            <person name="Bluhm B.H."/>
            <person name="Breakspear A."/>
            <person name="Brown D.W."/>
            <person name="Butchko R.A.E."/>
            <person name="Chapman S."/>
            <person name="Coulson R."/>
            <person name="Coutinho P.M."/>
            <person name="Danchin E.G.J."/>
            <person name="Diener A."/>
            <person name="Gale L.R."/>
            <person name="Gardiner D.M."/>
            <person name="Goff S."/>
            <person name="Hammond-Kosack K.E."/>
            <person name="Hilburn K."/>
            <person name="Hua-Van A."/>
            <person name="Jonkers W."/>
            <person name="Kazan K."/>
            <person name="Kodira C.D."/>
            <person name="Koehrsen M."/>
            <person name="Kumar L."/>
            <person name="Lee Y.-H."/>
            <person name="Li L."/>
            <person name="Manners J.M."/>
            <person name="Miranda-Saavedra D."/>
            <person name="Mukherjee M."/>
            <person name="Park G."/>
            <person name="Park J."/>
            <person name="Park S.-Y."/>
            <person name="Proctor R.H."/>
            <person name="Regev A."/>
            <person name="Ruiz-Roldan M.C."/>
            <person name="Sain D."/>
            <person name="Sakthikumar S."/>
            <person name="Sykes S."/>
            <person name="Schwartz D.C."/>
            <person name="Turgeon B.G."/>
            <person name="Wapinski I."/>
            <person name="Yoder O."/>
            <person name="Young S."/>
            <person name="Zeng Q."/>
            <person name="Zhou S."/>
            <person name="Galagan J."/>
            <person name="Cuomo C.A."/>
            <person name="Kistler H.C."/>
            <person name="Rep M."/>
        </authorList>
    </citation>
    <scope>NUCLEOTIDE SEQUENCE [LARGE SCALE GENOMIC DNA]</scope>
    <source>
        <strain>M3125 / FGSC 7600</strain>
    </source>
</reference>
<reference key="2">
    <citation type="journal article" date="2012" name="Fungal Genet. Biol.">
        <title>Identification of gene clusters associated with fusaric acid, fusarin, and perithecial pigment production in Fusarium verticillioides.</title>
        <authorList>
            <person name="Brown D.W."/>
            <person name="Butchko R.A."/>
            <person name="Busman M."/>
            <person name="Proctor R.H."/>
        </authorList>
    </citation>
    <scope>FUNCTION</scope>
</reference>
<comment type="function">
    <text evidence="1 5">Efflux pump; part of the gene cluster that mediates the biosynthesis of the mycotoxin fusarin C (PubMed:22652150). Within the cluster, FUS1, FUS2, FUS8 and FUS9 are sufficient for fusarin production (By similarity). The other FUS cluster members are not essential for fusarin C biosynthesis (By similarity).</text>
</comment>
<comment type="subcellular location">
    <subcellularLocation>
        <location evidence="2">Membrane</location>
        <topology evidence="2">Multi-pass membrane protein</topology>
    </subcellularLocation>
</comment>
<comment type="similarity">
    <text evidence="7">Belongs to the major facilitator superfamily. TCR/Tet family.</text>
</comment>
<feature type="chain" id="PRO_0000437360" description="Efflux pump FUS6">
    <location>
        <begin position="1"/>
        <end position="563"/>
    </location>
</feature>
<feature type="transmembrane region" description="Helical" evidence="2">
    <location>
        <begin position="39"/>
        <end position="59"/>
    </location>
</feature>
<feature type="transmembrane region" description="Helical" evidence="2">
    <location>
        <begin position="75"/>
        <end position="95"/>
    </location>
</feature>
<feature type="transmembrane region" description="Helical" evidence="2">
    <location>
        <begin position="105"/>
        <end position="125"/>
    </location>
</feature>
<feature type="transmembrane region" description="Helical" evidence="2">
    <location>
        <begin position="138"/>
        <end position="158"/>
    </location>
</feature>
<feature type="transmembrane region" description="Helical" evidence="2">
    <location>
        <begin position="167"/>
        <end position="187"/>
    </location>
</feature>
<feature type="transmembrane region" description="Helical" evidence="2">
    <location>
        <begin position="194"/>
        <end position="214"/>
    </location>
</feature>
<feature type="transmembrane region" description="Helical" evidence="2">
    <location>
        <begin position="233"/>
        <end position="253"/>
    </location>
</feature>
<feature type="transmembrane region" description="Helical" evidence="2">
    <location>
        <begin position="261"/>
        <end position="281"/>
    </location>
</feature>
<feature type="transmembrane region" description="Helical" evidence="2">
    <location>
        <begin position="305"/>
        <end position="325"/>
    </location>
</feature>
<feature type="transmembrane region" description="Helical" evidence="2">
    <location>
        <begin position="340"/>
        <end position="360"/>
    </location>
</feature>
<feature type="transmembrane region" description="Helical" evidence="2">
    <location>
        <begin position="368"/>
        <end position="388"/>
    </location>
</feature>
<feature type="transmembrane region" description="Helical" evidence="2">
    <location>
        <begin position="401"/>
        <end position="421"/>
    </location>
</feature>
<feature type="transmembrane region" description="Helical" evidence="2">
    <location>
        <begin position="433"/>
        <end position="453"/>
    </location>
</feature>
<feature type="transmembrane region" description="Helical" evidence="2">
    <location>
        <begin position="509"/>
        <end position="529"/>
    </location>
</feature>
<feature type="region of interest" description="Disordered" evidence="4">
    <location>
        <begin position="1"/>
        <end position="30"/>
    </location>
</feature>
<feature type="glycosylation site" description="N-linked (GlcNAc...) asparagine" evidence="3">
    <location>
        <position position="189"/>
    </location>
</feature>
<feature type="glycosylation site" description="N-linked (GlcNAc...) asparagine" evidence="3">
    <location>
        <position position="299"/>
    </location>
</feature>
<feature type="glycosylation site" description="N-linked (GlcNAc...) asparagine" evidence="3">
    <location>
        <position position="553"/>
    </location>
</feature>
<protein>
    <recommendedName>
        <fullName evidence="6">Efflux pump FUS6</fullName>
    </recommendedName>
    <alternativeName>
        <fullName evidence="6">Fusarin biosynthesis protein 6</fullName>
    </alternativeName>
</protein>
<organism>
    <name type="scientific">Gibberella moniliformis (strain M3125 / FGSC 7600)</name>
    <name type="common">Maize ear and stalk rot fungus</name>
    <name type="synonym">Fusarium verticillioides</name>
    <dbReference type="NCBI Taxonomy" id="334819"/>
    <lineage>
        <taxon>Eukaryota</taxon>
        <taxon>Fungi</taxon>
        <taxon>Dikarya</taxon>
        <taxon>Ascomycota</taxon>
        <taxon>Pezizomycotina</taxon>
        <taxon>Sordariomycetes</taxon>
        <taxon>Hypocreomycetidae</taxon>
        <taxon>Hypocreales</taxon>
        <taxon>Nectriaceae</taxon>
        <taxon>Fusarium</taxon>
        <taxon>Fusarium fujikuroi species complex</taxon>
    </lineage>
</organism>
<proteinExistence type="inferred from homology"/>
<dbReference type="EMBL" id="CM000586">
    <property type="protein sequence ID" value="EWG52302.1"/>
    <property type="molecule type" value="Genomic_DNA"/>
</dbReference>
<dbReference type="EMBL" id="CM000586">
    <property type="protein sequence ID" value="EWG52303.1"/>
    <property type="molecule type" value="Genomic_DNA"/>
</dbReference>
<dbReference type="RefSeq" id="XP_018758493.1">
    <property type="nucleotide sequence ID" value="XM_018900243.1"/>
</dbReference>
<dbReference type="RefSeq" id="XP_018758494.1">
    <property type="nucleotide sequence ID" value="XM_018900244.1"/>
</dbReference>
<dbReference type="SMR" id="W7MLD3"/>
<dbReference type="GlyCosmos" id="W7MLD3">
    <property type="glycosylation" value="3 sites, No reported glycans"/>
</dbReference>
<dbReference type="EnsemblFungi" id="FVEG_11081T0">
    <property type="protein sequence ID" value="FVEG_11081T0"/>
    <property type="gene ID" value="FVEG_11081"/>
</dbReference>
<dbReference type="GeneID" id="30068617"/>
<dbReference type="KEGG" id="fvr:FVEG_11081"/>
<dbReference type="VEuPathDB" id="FungiDB:FVEG_11081"/>
<dbReference type="eggNOG" id="KOG0254">
    <property type="taxonomic scope" value="Eukaryota"/>
</dbReference>
<dbReference type="HOGENOM" id="CLU_000960_22_0_1"/>
<dbReference type="OMA" id="DQLFWPN"/>
<dbReference type="OrthoDB" id="86378at110618"/>
<dbReference type="Proteomes" id="UP000009096">
    <property type="component" value="Chromosome 9"/>
</dbReference>
<dbReference type="GO" id="GO:0005886">
    <property type="term" value="C:plasma membrane"/>
    <property type="evidence" value="ECO:0007669"/>
    <property type="project" value="TreeGrafter"/>
</dbReference>
<dbReference type="GO" id="GO:0022857">
    <property type="term" value="F:transmembrane transporter activity"/>
    <property type="evidence" value="ECO:0007669"/>
    <property type="project" value="InterPro"/>
</dbReference>
<dbReference type="CDD" id="cd17502">
    <property type="entry name" value="MFS_Azr1_MDR_like"/>
    <property type="match status" value="1"/>
</dbReference>
<dbReference type="FunFam" id="1.20.1250.20:FF:000484">
    <property type="entry name" value="MFS general substrate transporter"/>
    <property type="match status" value="1"/>
</dbReference>
<dbReference type="Gene3D" id="1.20.1250.20">
    <property type="entry name" value="MFS general substrate transporter like domains"/>
    <property type="match status" value="1"/>
</dbReference>
<dbReference type="Gene3D" id="1.20.1720.10">
    <property type="entry name" value="Multidrug resistance protein D"/>
    <property type="match status" value="1"/>
</dbReference>
<dbReference type="InterPro" id="IPR011701">
    <property type="entry name" value="MFS"/>
</dbReference>
<dbReference type="InterPro" id="IPR020846">
    <property type="entry name" value="MFS_dom"/>
</dbReference>
<dbReference type="InterPro" id="IPR036259">
    <property type="entry name" value="MFS_trans_sf"/>
</dbReference>
<dbReference type="PANTHER" id="PTHR23501">
    <property type="entry name" value="MAJOR FACILITATOR SUPERFAMILY"/>
    <property type="match status" value="1"/>
</dbReference>
<dbReference type="PANTHER" id="PTHR23501:SF187">
    <property type="entry name" value="MAJOR FACILITATOR SUPERFAMILY (MFS) PROFILE DOMAIN-CONTAINING PROTEIN"/>
    <property type="match status" value="1"/>
</dbReference>
<dbReference type="Pfam" id="PF07690">
    <property type="entry name" value="MFS_1"/>
    <property type="match status" value="1"/>
</dbReference>
<dbReference type="PRINTS" id="PR01036">
    <property type="entry name" value="TCRTETB"/>
</dbReference>
<dbReference type="SUPFAM" id="SSF103473">
    <property type="entry name" value="MFS general substrate transporter"/>
    <property type="match status" value="1"/>
</dbReference>
<dbReference type="PROSITE" id="PS50850">
    <property type="entry name" value="MFS"/>
    <property type="match status" value="1"/>
</dbReference>
<name>FUS6_GIBM7</name>